<feature type="chain" id="PRO_0000134125" description="Small ribosomal subunit protein uS2">
    <location>
        <begin position="1"/>
        <end position="233"/>
    </location>
</feature>
<comment type="similarity">
    <text evidence="1">Belongs to the universal ribosomal protein uS2 family.</text>
</comment>
<reference key="1">
    <citation type="journal article" date="2006" name="J. Bacteriol.">
        <title>Pathogenomic sequence analysis of Bacillus cereus and Bacillus thuringiensis isolates closely related to Bacillus anthracis.</title>
        <authorList>
            <person name="Han C.S."/>
            <person name="Xie G."/>
            <person name="Challacombe J.F."/>
            <person name="Altherr M.R."/>
            <person name="Bhotika S.S."/>
            <person name="Bruce D."/>
            <person name="Campbell C.S."/>
            <person name="Campbell M.L."/>
            <person name="Chen J."/>
            <person name="Chertkov O."/>
            <person name="Cleland C."/>
            <person name="Dimitrijevic M."/>
            <person name="Doggett N.A."/>
            <person name="Fawcett J.J."/>
            <person name="Glavina T."/>
            <person name="Goodwin L.A."/>
            <person name="Hill K.K."/>
            <person name="Hitchcock P."/>
            <person name="Jackson P.J."/>
            <person name="Keim P."/>
            <person name="Kewalramani A.R."/>
            <person name="Longmire J."/>
            <person name="Lucas S."/>
            <person name="Malfatti S."/>
            <person name="McMurry K."/>
            <person name="Meincke L.J."/>
            <person name="Misra M."/>
            <person name="Moseman B.L."/>
            <person name="Mundt M."/>
            <person name="Munk A.C."/>
            <person name="Okinaka R.T."/>
            <person name="Parson-Quintana B."/>
            <person name="Reilly L.P."/>
            <person name="Richardson P."/>
            <person name="Robinson D.L."/>
            <person name="Rubin E."/>
            <person name="Saunders E."/>
            <person name="Tapia R."/>
            <person name="Tesmer J.G."/>
            <person name="Thayer N."/>
            <person name="Thompson L.S."/>
            <person name="Tice H."/>
            <person name="Ticknor L.O."/>
            <person name="Wills P.L."/>
            <person name="Brettin T.S."/>
            <person name="Gilna P."/>
        </authorList>
    </citation>
    <scope>NUCLEOTIDE SEQUENCE [LARGE SCALE GENOMIC DNA]</scope>
    <source>
        <strain>ZK / E33L</strain>
    </source>
</reference>
<evidence type="ECO:0000255" key="1">
    <source>
        <dbReference type="HAMAP-Rule" id="MF_00291"/>
    </source>
</evidence>
<evidence type="ECO:0000305" key="2"/>
<keyword id="KW-0687">Ribonucleoprotein</keyword>
<keyword id="KW-0689">Ribosomal protein</keyword>
<accession>Q636J9</accession>
<dbReference type="EMBL" id="CP000001">
    <property type="protein sequence ID" value="AAU16680.1"/>
    <property type="molecule type" value="Genomic_DNA"/>
</dbReference>
<dbReference type="RefSeq" id="WP_000111483.1">
    <property type="nucleotide sequence ID" value="NZ_CP009968.1"/>
</dbReference>
<dbReference type="SMR" id="Q636J9"/>
<dbReference type="GeneID" id="75086962"/>
<dbReference type="KEGG" id="bcz:BCE33L3586"/>
<dbReference type="PATRIC" id="fig|288681.22.peg.1825"/>
<dbReference type="Proteomes" id="UP000002612">
    <property type="component" value="Chromosome"/>
</dbReference>
<dbReference type="GO" id="GO:0022627">
    <property type="term" value="C:cytosolic small ribosomal subunit"/>
    <property type="evidence" value="ECO:0007669"/>
    <property type="project" value="TreeGrafter"/>
</dbReference>
<dbReference type="GO" id="GO:0003735">
    <property type="term" value="F:structural constituent of ribosome"/>
    <property type="evidence" value="ECO:0007669"/>
    <property type="project" value="InterPro"/>
</dbReference>
<dbReference type="GO" id="GO:0006412">
    <property type="term" value="P:translation"/>
    <property type="evidence" value="ECO:0007669"/>
    <property type="project" value="UniProtKB-UniRule"/>
</dbReference>
<dbReference type="CDD" id="cd01425">
    <property type="entry name" value="RPS2"/>
    <property type="match status" value="1"/>
</dbReference>
<dbReference type="FunFam" id="1.10.287.610:FF:000001">
    <property type="entry name" value="30S ribosomal protein S2"/>
    <property type="match status" value="1"/>
</dbReference>
<dbReference type="Gene3D" id="3.40.50.10490">
    <property type="entry name" value="Glucose-6-phosphate isomerase like protein, domain 1"/>
    <property type="match status" value="1"/>
</dbReference>
<dbReference type="Gene3D" id="1.10.287.610">
    <property type="entry name" value="Helix hairpin bin"/>
    <property type="match status" value="1"/>
</dbReference>
<dbReference type="HAMAP" id="MF_00291_B">
    <property type="entry name" value="Ribosomal_uS2_B"/>
    <property type="match status" value="1"/>
</dbReference>
<dbReference type="InterPro" id="IPR001865">
    <property type="entry name" value="Ribosomal_uS2"/>
</dbReference>
<dbReference type="InterPro" id="IPR005706">
    <property type="entry name" value="Ribosomal_uS2_bac/mit/plastid"/>
</dbReference>
<dbReference type="InterPro" id="IPR018130">
    <property type="entry name" value="Ribosomal_uS2_CS"/>
</dbReference>
<dbReference type="InterPro" id="IPR023591">
    <property type="entry name" value="Ribosomal_uS2_flav_dom_sf"/>
</dbReference>
<dbReference type="NCBIfam" id="TIGR01011">
    <property type="entry name" value="rpsB_bact"/>
    <property type="match status" value="1"/>
</dbReference>
<dbReference type="PANTHER" id="PTHR12534">
    <property type="entry name" value="30S RIBOSOMAL PROTEIN S2 PROKARYOTIC AND ORGANELLAR"/>
    <property type="match status" value="1"/>
</dbReference>
<dbReference type="PANTHER" id="PTHR12534:SF0">
    <property type="entry name" value="SMALL RIBOSOMAL SUBUNIT PROTEIN US2M"/>
    <property type="match status" value="1"/>
</dbReference>
<dbReference type="Pfam" id="PF00318">
    <property type="entry name" value="Ribosomal_S2"/>
    <property type="match status" value="1"/>
</dbReference>
<dbReference type="PRINTS" id="PR00395">
    <property type="entry name" value="RIBOSOMALS2"/>
</dbReference>
<dbReference type="SUPFAM" id="SSF52313">
    <property type="entry name" value="Ribosomal protein S2"/>
    <property type="match status" value="1"/>
</dbReference>
<dbReference type="PROSITE" id="PS00962">
    <property type="entry name" value="RIBOSOMAL_S2_1"/>
    <property type="match status" value="1"/>
</dbReference>
<dbReference type="PROSITE" id="PS00963">
    <property type="entry name" value="RIBOSOMAL_S2_2"/>
    <property type="match status" value="1"/>
</dbReference>
<organism>
    <name type="scientific">Bacillus cereus (strain ZK / E33L)</name>
    <dbReference type="NCBI Taxonomy" id="288681"/>
    <lineage>
        <taxon>Bacteria</taxon>
        <taxon>Bacillati</taxon>
        <taxon>Bacillota</taxon>
        <taxon>Bacilli</taxon>
        <taxon>Bacillales</taxon>
        <taxon>Bacillaceae</taxon>
        <taxon>Bacillus</taxon>
        <taxon>Bacillus cereus group</taxon>
    </lineage>
</organism>
<protein>
    <recommendedName>
        <fullName evidence="1">Small ribosomal subunit protein uS2</fullName>
    </recommendedName>
    <alternativeName>
        <fullName evidence="2">30S ribosomal protein S2</fullName>
    </alternativeName>
</protein>
<sequence>MSVISMKQLLEAGVHFGHQTRRWNPKMKRYIFTERNGIYIIDLQKTVKKVEEAFKVMRDIAAEGGDILFVGTKKQAQEAIKEEATRAGMYFVNQRWLGGTLTNFQTIQKRIKRLKDIERMQEDGTFEVLPKKEVVQLKKELERLEKFLGGIKDMKGLPSALFVVDPRKERIAVAEARKLHIPIIGIVDTNCDPDEIDHVIPANDDAIRAVKLLTSKMADAILEAKQGEETVTA</sequence>
<name>RS2_BACCZ</name>
<proteinExistence type="inferred from homology"/>
<gene>
    <name evidence="1" type="primary">rpsB</name>
    <name type="ordered locus">BCE33L3586</name>
</gene>